<protein>
    <recommendedName>
        <fullName evidence="1">Outer capsid protein VP4</fullName>
    </recommendedName>
    <alternativeName>
        <fullName evidence="1">Hemagglutinin</fullName>
    </alternativeName>
    <component>
        <recommendedName>
            <fullName evidence="1">Outer capsid protein VP8*</fullName>
        </recommendedName>
    </component>
    <component>
        <recommendedName>
            <fullName evidence="1">Outer capsid protein VP5*</fullName>
        </recommendedName>
    </component>
</protein>
<sequence length="775" mass="86549">MASLIYRQLLTNSYTVELSDEIQEIGSTKTQDVTVNPGPFAQTNYAPVNWGPGETNDSTTVEPVLDGPYQPTTFNPPVSYWMLLAPTNAGVVVEGTNNTNRWLATILIEPNVQQVERTYTLFGQQVQVTVSNDSQTKWKFVDLSKQTQDGNYSQHGSLLSTPKLYGVMKHGGKIYTYNGETPNATTGYYSTTNFDTVNMTAYCDFYIIPLAQEAKCTEYINNGLPPIQNTRNIVPVSIVSRNIVYTRAQPNQDIVVSKTSLWKEMQYNRDIVIRFKFANSIIKSGGLGYKWSEVSFKPANYQYTYTRDGEEVTAHTTCSVNGINDFNYNGGSLPTDFVISKYEVIKENSFVYIDYWDDSQAFRNMVNVRSLAADLNSVMCTGGDYSFALPVGNYPVMTGGAVSLHSAGVTLSTQFTDFVSLNSLRFRFRLSVEEPPFSILRTRVSGLYGLPAARPNNSQEYYEIAGRFSLISLVPSNDDYQTPIINSVTVRQDLERQLGELRDEFNNLSQQIAMSQLIDLALLPLDMFSMFSGIKSTIDAAKSMATNVMKRFKKSSLANSVSTLTNSLSDAASSISRSASVRSVSSTASAWTEVSNITSDINVTTSSISTQTSTISRRLRLKEMATQTDGMNFDDISAAVLKTKIDKSTQLNTNTLPEIVTEASEKFIPNRAYRVKDDEVLEASTDGKYFAYKVETFEEIPFDVQKFADLVTDSPVISAIIDFKTLKNLNDNYGISRQQALNLLRSDPRVLREFINQDNPIIRNRIESLIMQCRL</sequence>
<reference key="1">
    <citation type="journal article" date="1988" name="J. Virol.">
        <title>Comparative analysis of the VP3 gene of divergent strains of the rotaviruses simian SA11 and bovine Nebraska calf diarrhea virus.</title>
        <authorList>
            <person name="Nishikawa K."/>
            <person name="Taniguchi K."/>
            <person name="Torres A."/>
            <person name="Hoshino Y."/>
            <person name="Green K.Y."/>
            <person name="Kapikian A.Z."/>
            <person name="Chanock R.M."/>
            <person name="Gorziglia M."/>
        </authorList>
    </citation>
    <scope>NUCLEOTIDE SEQUENCE [GENOMIC RNA]</scope>
</reference>
<reference key="2">
    <citation type="submission" date="2003-09" db="EMBL/GenBank/DDBJ databases">
        <title>VP4 gene of bovine rotavirus.</title>
        <authorList>
            <person name="Homma S."/>
            <person name="Hoshino Y."/>
        </authorList>
    </citation>
    <scope>NUCLEOTIDE SEQUENCE [GENOMIC RNA]</scope>
</reference>
<reference key="3">
    <citation type="journal article" date="2002" name="J. Virol.">
        <title>Initial interaction of rotavirus strains with N-acetylneuraminic (sialic) acid residues on the cell surface correlates with VP4 genotype, not species of origin.</title>
        <authorList>
            <person name="Ciarlet M."/>
            <person name="Ludert J.E."/>
            <person name="Iturriza-Gomara M."/>
            <person name="Liprandi F."/>
            <person name="Gray J.J."/>
            <person name="Desselberger U."/>
            <person name="Estes M.K."/>
        </authorList>
    </citation>
    <scope>SIALIC ACID DEPENDENCY</scope>
</reference>
<reference key="4">
    <citation type="journal article" date="2006" name="Glycoconj. J.">
        <title>Role of sialic acids in rotavirus infection.</title>
        <authorList>
            <person name="Isa P."/>
            <person name="Arias C.F."/>
            <person name="Lopez S."/>
        </authorList>
    </citation>
    <scope>REVIEW</scope>
</reference>
<organism>
    <name type="scientific">Rotavirus A (strain RVA/Cow/United States/NCDV-Lincoln/1969/G6P6[1])</name>
    <name type="common">RV-A</name>
    <name type="synonym">Rotavirus A (strain Nebraska calf diarrhea virus)</name>
    <dbReference type="NCBI Taxonomy" id="36439"/>
    <lineage>
        <taxon>Viruses</taxon>
        <taxon>Riboviria</taxon>
        <taxon>Orthornavirae</taxon>
        <taxon>Duplornaviricota</taxon>
        <taxon>Resentoviricetes</taxon>
        <taxon>Reovirales</taxon>
        <taxon>Sedoreoviridae</taxon>
        <taxon>Rotavirus</taxon>
        <taxon>Rotavirus A</taxon>
    </lineage>
</organism>
<organismHost>
    <name type="scientific">Bos taurus</name>
    <name type="common">Bovine</name>
    <dbReference type="NCBI Taxonomy" id="9913"/>
</organismHost>
<dbReference type="EMBL" id="AB119636">
    <property type="protein sequence ID" value="BAC85485.1"/>
    <property type="molecule type" value="Genomic_RNA"/>
</dbReference>
<dbReference type="PIR" id="C31159">
    <property type="entry name" value="VPXRT2"/>
</dbReference>
<dbReference type="SMR" id="P17465"/>
<dbReference type="GO" id="GO:0044172">
    <property type="term" value="C:host cell endoplasmic reticulum-Golgi intermediate compartment"/>
    <property type="evidence" value="ECO:0007669"/>
    <property type="project" value="UniProtKB-SubCell"/>
</dbReference>
<dbReference type="GO" id="GO:0020002">
    <property type="term" value="C:host cell plasma membrane"/>
    <property type="evidence" value="ECO:0007669"/>
    <property type="project" value="UniProtKB-SubCell"/>
</dbReference>
<dbReference type="GO" id="GO:0044168">
    <property type="term" value="C:host cell rough endoplasmic reticulum"/>
    <property type="evidence" value="ECO:0007669"/>
    <property type="project" value="UniProtKB-SubCell"/>
</dbReference>
<dbReference type="GO" id="GO:0044163">
    <property type="term" value="C:host cytoskeleton"/>
    <property type="evidence" value="ECO:0007669"/>
    <property type="project" value="UniProtKB-SubCell"/>
</dbReference>
<dbReference type="GO" id="GO:0016020">
    <property type="term" value="C:membrane"/>
    <property type="evidence" value="ECO:0007669"/>
    <property type="project" value="UniProtKB-KW"/>
</dbReference>
<dbReference type="GO" id="GO:0039624">
    <property type="term" value="C:viral outer capsid"/>
    <property type="evidence" value="ECO:0007669"/>
    <property type="project" value="UniProtKB-UniRule"/>
</dbReference>
<dbReference type="GO" id="GO:0039665">
    <property type="term" value="P:permeabilization of host organelle membrane involved in viral entry into host cell"/>
    <property type="evidence" value="ECO:0007669"/>
    <property type="project" value="UniProtKB-UniRule"/>
</dbReference>
<dbReference type="GO" id="GO:0019062">
    <property type="term" value="P:virion attachment to host cell"/>
    <property type="evidence" value="ECO:0007669"/>
    <property type="project" value="UniProtKB-UniRule"/>
</dbReference>
<dbReference type="Gene3D" id="1.20.5.170">
    <property type="match status" value="1"/>
</dbReference>
<dbReference type="Gene3D" id="2.60.120.200">
    <property type="match status" value="1"/>
</dbReference>
<dbReference type="HAMAP" id="MF_04132">
    <property type="entry name" value="Rota_A_VP4"/>
    <property type="match status" value="1"/>
</dbReference>
<dbReference type="HAMAP" id="MF_04125">
    <property type="entry name" value="Rota_VP4"/>
    <property type="match status" value="1"/>
</dbReference>
<dbReference type="InterPro" id="IPR013320">
    <property type="entry name" value="ConA-like_dom_sf"/>
</dbReference>
<dbReference type="InterPro" id="IPR042546">
    <property type="entry name" value="Rota_A_VP4"/>
</dbReference>
<dbReference type="InterPro" id="IPR035330">
    <property type="entry name" value="Rota_VP4_MID"/>
</dbReference>
<dbReference type="InterPro" id="IPR038017">
    <property type="entry name" value="Rota_VP4_MID_sf"/>
</dbReference>
<dbReference type="InterPro" id="IPR000416">
    <property type="entry name" value="VP4_concanavalin-like"/>
</dbReference>
<dbReference type="InterPro" id="IPR035329">
    <property type="entry name" value="VP4_helical"/>
</dbReference>
<dbReference type="Pfam" id="PF17477">
    <property type="entry name" value="Rota_VP4_MID"/>
    <property type="match status" value="1"/>
</dbReference>
<dbReference type="Pfam" id="PF00426">
    <property type="entry name" value="VP4_haemagglut"/>
    <property type="match status" value="1"/>
</dbReference>
<dbReference type="Pfam" id="PF17478">
    <property type="entry name" value="VP4_helical"/>
    <property type="match status" value="1"/>
</dbReference>
<dbReference type="SUPFAM" id="SSF49899">
    <property type="entry name" value="Concanavalin A-like lectins/glucanases"/>
    <property type="match status" value="1"/>
</dbReference>
<dbReference type="SUPFAM" id="SSF111379">
    <property type="entry name" value="VP4 membrane interaction domain"/>
    <property type="match status" value="1"/>
</dbReference>
<keyword id="KW-0167">Capsid protein</keyword>
<keyword id="KW-0175">Coiled coil</keyword>
<keyword id="KW-1015">Disulfide bond</keyword>
<keyword id="KW-0348">Hemagglutinin</keyword>
<keyword id="KW-1032">Host cell membrane</keyword>
<keyword id="KW-1035">Host cytoplasm</keyword>
<keyword id="KW-1037">Host cytoskeleton</keyword>
<keyword id="KW-1038">Host endoplasmic reticulum</keyword>
<keyword id="KW-1043">Host membrane</keyword>
<keyword id="KW-0945">Host-virus interaction</keyword>
<keyword id="KW-0472">Membrane</keyword>
<keyword id="KW-1152">Outer capsid protein</keyword>
<keyword id="KW-1161">Viral attachment to host cell</keyword>
<keyword id="KW-1162">Viral penetration into host cytoplasm</keyword>
<keyword id="KW-1173">Viral penetration via permeabilization of host membrane</keyword>
<keyword id="KW-0946">Virion</keyword>
<keyword id="KW-1160">Virus entry into host cell</keyword>
<comment type="function">
    <molecule>Outer capsid protein VP4</molecule>
    <text evidence="1">Spike-forming protein that mediates virion attachment to the host epithelial cell receptors and plays a major role in cell penetration, determination of host range restriction and virulence. Rotavirus attachment and entry into the host cell probably involves multiple sequential contacts between the outer capsid proteins VP4 and VP7, and the cell receptors. It is subsequently lost, together with VP7, following virus entry into the host cell. Following entry into the host cell, low intracellular or intravesicular Ca(2+) concentration probably causes the calcium-stabilized VP7 trimers to dissociate from the virion. This step is probably necessary for the membrane-disrupting entry step and the release of VP4, which is locked onto the virion by VP7. During the virus exit from the host cell, VP4 seems to be required to target the newly formed virions to the host cell lipid rafts.</text>
</comment>
<comment type="function">
    <molecule>Outer capsid protein VP5*</molecule>
    <text evidence="1">Forms the spike 'foot' and 'body' and acts as a membrane permeabilization protein that mediates release of viral particles from endosomal compartments into the cytoplasm. During entry, the part of VP5* that protrudes from the virus folds back on itself and reorganizes from a local dimer to a trimer. This reorganization may be linked to membrane penetration by exposing VP5* hydrophobic region. In integrin-dependent strains, VP5* targets the integrin heterodimer ITGA2/ITGB1 for cell attachment.</text>
</comment>
<comment type="function">
    <molecule>Outer capsid protein VP8*</molecule>
    <text evidence="1">Forms the head of the spikes and mediates the recognition of specific host cell surface glycans. It is the viral hemagglutinin and an important target of neutralizing antibodies. In sialic acid-dependent strains, VP8* binds to host cell sialic acid, most probably a ganglioside, providing the initial contact. In some other strains, VP8* mediates the attachment to histo-blood group antigens (HBGAs) for viral entry.</text>
</comment>
<comment type="subunit">
    <molecule>Outer capsid protein VP4</molecule>
    <text evidence="1">Homotrimer. VP4 adopts a dimeric appearance above the capsid surface, while forming a trimeric base anchored inside the capsid layer. Only hints of the third molecule are observed above the capsid surface. It probably performs a series of molecular rearrangements during viral entry. Prior to trypsin cleavage, it is flexible. The priming trypsin cleavage triggers its rearrangement into rigid spikes with approximate two-fold symmetry of their protruding parts. After an unknown second triggering event, cleaved VP4 may undergo another rearrangement, in which two VP5* subunits fold back on themselves and join a third subunit to form a tightly associated trimer, shaped like a folded umbrella. Interacts with VP6. Interacts with VP7.</text>
</comment>
<comment type="subunit">
    <molecule>Outer capsid protein VP5*</molecule>
    <text evidence="1">Homotrimer. The trimer is coiled-coil stabilized by its C-terminus, however, its N-terminus, known as antigen domain or 'body', seems to be flexible allowing it to self-associate either as a dimer or a trimer.</text>
</comment>
<comment type="subcellular location">
    <molecule>Outer capsid protein VP4</molecule>
    <subcellularLocation>
        <location evidence="1">Virion</location>
    </subcellularLocation>
    <subcellularLocation>
        <location evidence="1">Host rough endoplasmic reticulum</location>
    </subcellularLocation>
    <subcellularLocation>
        <location evidence="1">Host cell membrane</location>
    </subcellularLocation>
    <subcellularLocation>
        <location evidence="1">Host cytoplasm</location>
        <location evidence="1">Host cytoskeleton</location>
    </subcellularLocation>
    <subcellularLocation>
        <location evidence="1">Host endoplasmic reticulum-Golgi intermediate compartment</location>
    </subcellularLocation>
    <text evidence="1">The outer layer contains 180 copies of VP4, grouped as 60 dimers. Immature double-layered particles assembled in the cytoplasm bud across the membrane of the endoplasmic reticulum, acquiring during this process a transient lipid membrane that is modified with the ER resident viral glycoproteins NSP4 and VP7; these enveloped particles also contain VP4. As the particles move towards the interior of the ER cisternae, the transient lipid membrane and the non-structural protein NSP4 are lost, while the virus surface proteins VP4 and VP7 rearrange to form the outermost virus protein layer, yielding mature infectious triple-layered particles. VP4 also seems to associate with lipid rafts of the host cell membrane probably for the exit of the virus from the infected cell by an alternate pathway.</text>
</comment>
<comment type="subcellular location">
    <molecule>Outer capsid protein VP8*</molecule>
    <subcellularLocation>
        <location evidence="1">Virion</location>
    </subcellularLocation>
    <text evidence="1">Outer capsid protein.</text>
</comment>
<comment type="subcellular location">
    <molecule>Outer capsid protein VP5*</molecule>
    <subcellularLocation>
        <location evidence="1">Virion</location>
    </subcellularLocation>
    <text evidence="1">Outer capsid protein.</text>
</comment>
<comment type="domain">
    <molecule>Outer capsid protein VP4</molecule>
    <text evidence="1">The VP4 spike is divided into a foot, a stalk and body, and a head.</text>
</comment>
<comment type="PTM">
    <molecule>Outer capsid protein VP4</molecule>
    <text evidence="1">Proteolytic cleavage by trypsin results in activation of VP4 functions and greatly increases infectivity. The penetration into the host cell is dependent on trypsin treatment of VP4. It produces two peptides, VP5* and VP8* that remain associated with the virion. Cleavage of VP4 by trypsin probably occurs in vivo in the lumen of the intestine prior to infection of enterocytes. Trypsin seems to be incorporated into the three-layered viral particles but remains inactive as long as the viral outer capsid is intact and would only be activated upon the solubilization of the latter.</text>
</comment>
<comment type="miscellaneous">
    <text evidence="1">In group A rotaviruses, VP4 defines the P serotype.</text>
</comment>
<comment type="miscellaneous">
    <text evidence="1">Some rotavirus strains are neuraminidase-sensitive and require sialic acid to attach to the cell surface. Some rotavirus strains are integrin-dependent. Some rotavirus strains depend on ganglioside for their entry into the host cell. Hsp70 also seems to be involved in the entry of some strains.</text>
</comment>
<comment type="miscellaneous">
    <text evidence="1 2 3">This strain probably uses sialic acid to attach to the host cell.</text>
</comment>
<comment type="similarity">
    <text evidence="1">Belongs to the rotavirus VP4 family.</text>
</comment>
<accession>P17465</accession>
<accession>Q75Z90</accession>
<evidence type="ECO:0000255" key="1">
    <source>
        <dbReference type="HAMAP-Rule" id="MF_04132"/>
    </source>
</evidence>
<evidence type="ECO:0000269" key="2">
    <source>
    </source>
</evidence>
<evidence type="ECO:0000303" key="3">
    <source>
    </source>
</evidence>
<evidence type="ECO:0000305" key="4"/>
<name>VP4_ROTBN</name>
<feature type="chain" id="PRO_0000041123" description="Outer capsid protein VP4" evidence="1">
    <location>
        <begin position="1"/>
        <end position="775"/>
    </location>
</feature>
<feature type="chain" id="PRO_0000041124" description="Outer capsid protein VP8*" evidence="1">
    <location>
        <begin position="1"/>
        <end position="231"/>
    </location>
</feature>
<feature type="chain" id="PRO_0000041125" description="Outer capsid protein VP5*" evidence="1">
    <location>
        <begin position="248"/>
        <end position="775"/>
    </location>
</feature>
<feature type="region of interest" description="Spike head" evidence="1">
    <location>
        <begin position="65"/>
        <end position="224"/>
    </location>
</feature>
<feature type="region of interest" description="Spike body and stalk (antigen domain)" evidence="1">
    <location>
        <begin position="248"/>
        <end position="479"/>
    </location>
</feature>
<feature type="region of interest" description="Hydrophobic; possible role in virus entry into host cell" evidence="1">
    <location>
        <begin position="389"/>
        <end position="409"/>
    </location>
</feature>
<feature type="region of interest" description="Spike foot" evidence="1">
    <location>
        <begin position="510"/>
        <end position="775"/>
    </location>
</feature>
<feature type="coiled-coil region" evidence="1">
    <location>
        <begin position="484"/>
        <end position="518"/>
    </location>
</feature>
<feature type="short sequence motif" description="DGE motif; interaction with ITGA2/ITGB1 heterodimer" evidence="1">
    <location>
        <begin position="308"/>
        <end position="310"/>
    </location>
</feature>
<feature type="short sequence motif" description="YGL motif; interaction with ITGA4" evidence="1">
    <location>
        <begin position="448"/>
        <end position="450"/>
    </location>
</feature>
<feature type="short sequence motif" description="KID motif; interaction with HSPA8" evidence="1">
    <location>
        <begin position="644"/>
        <end position="646"/>
    </location>
</feature>
<feature type="site" description="Binding to sialic acid" evidence="1">
    <location>
        <position position="101"/>
    </location>
</feature>
<feature type="site" description="Binding to sialic acid" evidence="1">
    <location>
        <position position="190"/>
    </location>
</feature>
<feature type="site" description="Cleavage" evidence="1">
    <location>
        <begin position="231"/>
        <end position="232"/>
    </location>
</feature>
<feature type="site" description="Cleavage" evidence="1">
    <location>
        <begin position="241"/>
        <end position="242"/>
    </location>
</feature>
<feature type="site" description="Cleavage; associated with enhancement of infectivity" evidence="1">
    <location>
        <begin position="247"/>
        <end position="248"/>
    </location>
</feature>
<feature type="disulfide bond" evidence="1">
    <location>
        <begin position="203"/>
        <end position="216"/>
    </location>
</feature>
<feature type="disulfide bond" evidence="1">
    <location>
        <begin position="318"/>
        <end position="380"/>
    </location>
</feature>
<feature type="sequence conflict" description="In Ref. 2; BAC85485." evidence="4" ref="2">
    <original>K</original>
    <variation>IK</variation>
    <location>
        <position position="676"/>
    </location>
</feature>
<proteinExistence type="inferred from homology"/>